<accession>Q5RB52</accession>
<reference key="1">
    <citation type="submission" date="2004-11" db="EMBL/GenBank/DDBJ databases">
        <authorList>
            <consortium name="The German cDNA consortium"/>
        </authorList>
    </citation>
    <scope>NUCLEOTIDE SEQUENCE [LARGE SCALE MRNA]</scope>
    <source>
        <tissue>Heart</tissue>
    </source>
</reference>
<evidence type="ECO:0000250" key="1">
    <source>
        <dbReference type="UniProtKB" id="Q9H8H0"/>
    </source>
</evidence>
<sequence>MAALEEEFTLSSVVLSAGPEGLLGVEQSDKTDQFLVTDSGRTVILYKVSDQKPLGSWSVKQGQIITCPAVCNFQTGEYVVVHDNKVLRIWNNEDVNLDKVFKATLSAEVYRILSVQGTEPLVLFKEGAVRGLEALLADPQQKIETVISDEEVIKWTKFFIVFRHRVLIFITEKHGNYFAYVQMFNSRILTKYTLLLGQDENSVVESFTASVDRKFISLMSLSSDGCIYETLIPIRPTDPEKNQSLVRSLLLKAVVSDNTQNGVALTALDQDHVAVLGSPLAASKECLSVWNIKFQTLQTSKELSQGTSGQVWYYGEHLFMLHGKSLTVIPYKCEVSSLAGALGKLKHSQDPGTHVVPHFVNWETPQGCGLGFQNSEQSRRILRRRKTEVSLQPEVPPSKQLLSTIMKDSEKHIEVEVRKFLALKQTPDFHTVVGDTVTGLLERCKAEPSFYPRNCLMQLIQTHVLSYSLCPDLMEIALKKKDVQLLQLCLQQFPDIPESVTCACLKIFLSIGDDSLQETDVSMESVFDYSNSVHDEKMEEQTEILQNGFNPEEDKCNNCDQELNKKPQDETKESTSCPVVQKRAALLNAILHSAFSETFLLPHLKDIPAQHITLFLKYLYFLYLKCSENATMTLPGIHPPTLNQIMDWICLLLDANFTVVVMMPEAKRLLINLYKLVKSQITVYSELNKIEVSFRELQKLNQEKNNRGLYSIEVLELF</sequence>
<proteinExistence type="evidence at transcript level"/>
<keyword id="KW-0010">Activator</keyword>
<keyword id="KW-0488">Methylation</keyword>
<keyword id="KW-0539">Nucleus</keyword>
<keyword id="KW-1185">Reference proteome</keyword>
<keyword id="KW-0690">Ribosome biogenesis</keyword>
<keyword id="KW-0698">rRNA processing</keyword>
<keyword id="KW-0804">Transcription</keyword>
<keyword id="KW-0805">Transcription regulation</keyword>
<protein>
    <recommendedName>
        <fullName>Nucleolar protein 11</fullName>
    </recommendedName>
</protein>
<dbReference type="EMBL" id="CR858803">
    <property type="protein sequence ID" value="CAH91008.1"/>
    <property type="molecule type" value="mRNA"/>
</dbReference>
<dbReference type="RefSeq" id="NP_001125582.1">
    <property type="nucleotide sequence ID" value="NM_001132110.1"/>
</dbReference>
<dbReference type="SMR" id="Q5RB52"/>
<dbReference type="FunCoup" id="Q5RB52">
    <property type="interactions" value="3262"/>
</dbReference>
<dbReference type="STRING" id="9601.ENSPPYP00000009622"/>
<dbReference type="GeneID" id="100172497"/>
<dbReference type="KEGG" id="pon:100172497"/>
<dbReference type="CTD" id="25926"/>
<dbReference type="eggNOG" id="ENOG502SB74">
    <property type="taxonomic scope" value="Eukaryota"/>
</dbReference>
<dbReference type="InParanoid" id="Q5RB52"/>
<dbReference type="OrthoDB" id="6502630at2759"/>
<dbReference type="Proteomes" id="UP000001595">
    <property type="component" value="Unplaced"/>
</dbReference>
<dbReference type="GO" id="GO:0005730">
    <property type="term" value="C:nucleolus"/>
    <property type="evidence" value="ECO:0000250"/>
    <property type="project" value="UniProtKB"/>
</dbReference>
<dbReference type="GO" id="GO:0034455">
    <property type="term" value="C:t-UTP complex"/>
    <property type="evidence" value="ECO:0000250"/>
    <property type="project" value="UniProtKB"/>
</dbReference>
<dbReference type="GO" id="GO:0003723">
    <property type="term" value="F:RNA binding"/>
    <property type="evidence" value="ECO:0007669"/>
    <property type="project" value="TreeGrafter"/>
</dbReference>
<dbReference type="GO" id="GO:0030490">
    <property type="term" value="P:maturation of SSU-rRNA"/>
    <property type="evidence" value="ECO:0000250"/>
    <property type="project" value="UniProtKB"/>
</dbReference>
<dbReference type="GO" id="GO:1901838">
    <property type="term" value="P:positive regulation of transcription of nucleolar large rRNA by RNA polymerase I"/>
    <property type="evidence" value="ECO:0000250"/>
    <property type="project" value="UniProtKB"/>
</dbReference>
<dbReference type="InterPro" id="IPR042859">
    <property type="entry name" value="NOL11"/>
</dbReference>
<dbReference type="InterPro" id="IPR048897">
    <property type="entry name" value="Nol11_C"/>
</dbReference>
<dbReference type="InterPro" id="IPR012584">
    <property type="entry name" value="NOL11_N"/>
</dbReference>
<dbReference type="InterPro" id="IPR036322">
    <property type="entry name" value="WD40_repeat_dom_sf"/>
</dbReference>
<dbReference type="PANTHER" id="PTHR15633">
    <property type="entry name" value="NUCLEOLAR PROTEIN 11"/>
    <property type="match status" value="1"/>
</dbReference>
<dbReference type="PANTHER" id="PTHR15633:SF3">
    <property type="entry name" value="NUCLEOLAR PROTEIN 11"/>
    <property type="match status" value="1"/>
</dbReference>
<dbReference type="Pfam" id="PF20998">
    <property type="entry name" value="Nol11_C"/>
    <property type="match status" value="1"/>
</dbReference>
<dbReference type="Pfam" id="PF08168">
    <property type="entry name" value="NOL11_N"/>
    <property type="match status" value="1"/>
</dbReference>
<dbReference type="SUPFAM" id="SSF50978">
    <property type="entry name" value="WD40 repeat-like"/>
    <property type="match status" value="1"/>
</dbReference>
<gene>
    <name type="primary">NOL11</name>
</gene>
<feature type="chain" id="PRO_0000096933" description="Nucleolar protein 11">
    <location>
        <begin position="1"/>
        <end position="718"/>
    </location>
</feature>
<feature type="modified residue" description="N6-methyllysine" evidence="1">
    <location>
        <position position="346"/>
    </location>
</feature>
<comment type="function">
    <text evidence="1">Ribosome biogenesis factor. May be required for both optimal rDNA transcription and small subunit (SSU) pre-rRNA processing at sites A', A0, 1 and 2b (By similarity).</text>
</comment>
<comment type="subunit">
    <text evidence="1">Interacts with UTP4. Interacts with FBL/fibrillarin in a transcription-dependent manner. May associate with the proposed t-UTP subcomplex of the SSU processome containing at least UTP4, WDR43, HEATR1, UTP15, WDR75.</text>
</comment>
<comment type="subcellular location">
    <subcellularLocation>
        <location evidence="1">Nucleus</location>
        <location evidence="1">Nucleolus</location>
    </subcellularLocation>
</comment>
<name>NOL11_PONAB</name>
<organism>
    <name type="scientific">Pongo abelii</name>
    <name type="common">Sumatran orangutan</name>
    <name type="synonym">Pongo pygmaeus abelii</name>
    <dbReference type="NCBI Taxonomy" id="9601"/>
    <lineage>
        <taxon>Eukaryota</taxon>
        <taxon>Metazoa</taxon>
        <taxon>Chordata</taxon>
        <taxon>Craniata</taxon>
        <taxon>Vertebrata</taxon>
        <taxon>Euteleostomi</taxon>
        <taxon>Mammalia</taxon>
        <taxon>Eutheria</taxon>
        <taxon>Euarchontoglires</taxon>
        <taxon>Primates</taxon>
        <taxon>Haplorrhini</taxon>
        <taxon>Catarrhini</taxon>
        <taxon>Hominidae</taxon>
        <taxon>Pongo</taxon>
    </lineage>
</organism>